<keyword id="KW-0249">Electron transport</keyword>
<keyword id="KW-0349">Heme</keyword>
<keyword id="KW-0408">Iron</keyword>
<keyword id="KW-0472">Membrane</keyword>
<keyword id="KW-0479">Metal-binding</keyword>
<keyword id="KW-0496">Mitochondrion</keyword>
<keyword id="KW-0999">Mitochondrion inner membrane</keyword>
<keyword id="KW-0679">Respiratory chain</keyword>
<keyword id="KW-0812">Transmembrane</keyword>
<keyword id="KW-1133">Transmembrane helix</keyword>
<keyword id="KW-0813">Transport</keyword>
<keyword id="KW-0830">Ubiquinone</keyword>
<reference key="1">
    <citation type="journal article" date="2004" name="Syst. Biol.">
        <title>A molecular supermatrix of the rabbits and hares (Leporidae) allows for the identification of five intercontinental exchanges during the Miocene.</title>
        <authorList>
            <person name="Matthee C.A."/>
            <person name="van Vuuren B.J."/>
            <person name="Bell D."/>
            <person name="Robinson T.J."/>
        </authorList>
    </citation>
    <scope>NUCLEOTIDE SEQUENCE [GENOMIC DNA]</scope>
</reference>
<reference key="2">
    <citation type="submission" date="1997-06" db="EMBL/GenBank/DDBJ databases">
        <title>Cytochrome b phylogeny of North American hares and jackrabbits (Lepus, Lagomorpha) and the effects of mutational saturation in outgroup taxa.</title>
        <authorList>
            <person name="Halanych K.M."/>
            <person name="Demboski J.R."/>
            <person name="van Vuuren B.J."/>
            <person name="Klein D.R."/>
            <person name="Cook J.A."/>
        </authorList>
    </citation>
    <scope>NUCLEOTIDE SEQUENCE [GENOMIC DNA] OF 1-234</scope>
    <source>
        <strain>Isolate NK 21994</strain>
    </source>
</reference>
<proteinExistence type="inferred from homology"/>
<dbReference type="EMBL" id="AY292731">
    <property type="protein sequence ID" value="AAS54927.1"/>
    <property type="molecule type" value="Genomic_DNA"/>
</dbReference>
<dbReference type="EMBL" id="AF010160">
    <property type="protein sequence ID" value="AAB94500.1"/>
    <property type="molecule type" value="Genomic_DNA"/>
</dbReference>
<dbReference type="SMR" id="O47560"/>
<dbReference type="GO" id="GO:0005743">
    <property type="term" value="C:mitochondrial inner membrane"/>
    <property type="evidence" value="ECO:0007669"/>
    <property type="project" value="UniProtKB-SubCell"/>
</dbReference>
<dbReference type="GO" id="GO:0045275">
    <property type="term" value="C:respiratory chain complex III"/>
    <property type="evidence" value="ECO:0007669"/>
    <property type="project" value="InterPro"/>
</dbReference>
<dbReference type="GO" id="GO:0046872">
    <property type="term" value="F:metal ion binding"/>
    <property type="evidence" value="ECO:0007669"/>
    <property type="project" value="UniProtKB-KW"/>
</dbReference>
<dbReference type="GO" id="GO:0008121">
    <property type="term" value="F:ubiquinol-cytochrome-c reductase activity"/>
    <property type="evidence" value="ECO:0007669"/>
    <property type="project" value="InterPro"/>
</dbReference>
<dbReference type="GO" id="GO:0006122">
    <property type="term" value="P:mitochondrial electron transport, ubiquinol to cytochrome c"/>
    <property type="evidence" value="ECO:0007669"/>
    <property type="project" value="TreeGrafter"/>
</dbReference>
<dbReference type="CDD" id="cd00290">
    <property type="entry name" value="cytochrome_b_C"/>
    <property type="match status" value="1"/>
</dbReference>
<dbReference type="CDD" id="cd00284">
    <property type="entry name" value="Cytochrome_b_N"/>
    <property type="match status" value="1"/>
</dbReference>
<dbReference type="FunFam" id="1.20.810.10:FF:000002">
    <property type="entry name" value="Cytochrome b"/>
    <property type="match status" value="1"/>
</dbReference>
<dbReference type="Gene3D" id="1.20.810.10">
    <property type="entry name" value="Cytochrome Bc1 Complex, Chain C"/>
    <property type="match status" value="1"/>
</dbReference>
<dbReference type="InterPro" id="IPR005798">
    <property type="entry name" value="Cyt_b/b6_C"/>
</dbReference>
<dbReference type="InterPro" id="IPR036150">
    <property type="entry name" value="Cyt_b/b6_C_sf"/>
</dbReference>
<dbReference type="InterPro" id="IPR005797">
    <property type="entry name" value="Cyt_b/b6_N"/>
</dbReference>
<dbReference type="InterPro" id="IPR027387">
    <property type="entry name" value="Cytb/b6-like_sf"/>
</dbReference>
<dbReference type="InterPro" id="IPR030689">
    <property type="entry name" value="Cytochrome_b"/>
</dbReference>
<dbReference type="InterPro" id="IPR048260">
    <property type="entry name" value="Cytochrome_b_C_euk/bac"/>
</dbReference>
<dbReference type="InterPro" id="IPR048259">
    <property type="entry name" value="Cytochrome_b_N_euk/bac"/>
</dbReference>
<dbReference type="InterPro" id="IPR016174">
    <property type="entry name" value="Di-haem_cyt_TM"/>
</dbReference>
<dbReference type="PANTHER" id="PTHR19271">
    <property type="entry name" value="CYTOCHROME B"/>
    <property type="match status" value="1"/>
</dbReference>
<dbReference type="PANTHER" id="PTHR19271:SF16">
    <property type="entry name" value="CYTOCHROME B"/>
    <property type="match status" value="1"/>
</dbReference>
<dbReference type="Pfam" id="PF00032">
    <property type="entry name" value="Cytochrom_B_C"/>
    <property type="match status" value="1"/>
</dbReference>
<dbReference type="Pfam" id="PF00033">
    <property type="entry name" value="Cytochrome_B"/>
    <property type="match status" value="1"/>
</dbReference>
<dbReference type="PIRSF" id="PIRSF038885">
    <property type="entry name" value="COB"/>
    <property type="match status" value="1"/>
</dbReference>
<dbReference type="SUPFAM" id="SSF81648">
    <property type="entry name" value="a domain/subunit of cytochrome bc1 complex (Ubiquinol-cytochrome c reductase)"/>
    <property type="match status" value="1"/>
</dbReference>
<dbReference type="SUPFAM" id="SSF81342">
    <property type="entry name" value="Transmembrane di-heme cytochromes"/>
    <property type="match status" value="1"/>
</dbReference>
<dbReference type="PROSITE" id="PS51003">
    <property type="entry name" value="CYTB_CTER"/>
    <property type="match status" value="1"/>
</dbReference>
<dbReference type="PROSITE" id="PS51002">
    <property type="entry name" value="CYTB_NTER"/>
    <property type="match status" value="1"/>
</dbReference>
<accession>O47560</accession>
<accession>Q6ELV3</accession>
<geneLocation type="mitochondrion"/>
<feature type="chain" id="PRO_0000061101" description="Cytochrome b">
    <location>
        <begin position="1"/>
        <end position="379"/>
    </location>
</feature>
<feature type="transmembrane region" description="Helical" evidence="2">
    <location>
        <begin position="33"/>
        <end position="53"/>
    </location>
</feature>
<feature type="transmembrane region" description="Helical" evidence="2">
    <location>
        <begin position="77"/>
        <end position="98"/>
    </location>
</feature>
<feature type="transmembrane region" description="Helical" evidence="2">
    <location>
        <begin position="113"/>
        <end position="133"/>
    </location>
</feature>
<feature type="transmembrane region" description="Helical" evidence="2">
    <location>
        <begin position="178"/>
        <end position="198"/>
    </location>
</feature>
<feature type="transmembrane region" description="Helical" evidence="2">
    <location>
        <begin position="226"/>
        <end position="246"/>
    </location>
</feature>
<feature type="transmembrane region" description="Helical" evidence="2">
    <location>
        <begin position="288"/>
        <end position="308"/>
    </location>
</feature>
<feature type="transmembrane region" description="Helical" evidence="2">
    <location>
        <begin position="320"/>
        <end position="340"/>
    </location>
</feature>
<feature type="transmembrane region" description="Helical" evidence="2">
    <location>
        <begin position="347"/>
        <end position="367"/>
    </location>
</feature>
<feature type="binding site" description="axial binding residue" evidence="2">
    <location>
        <position position="83"/>
    </location>
    <ligand>
        <name>heme b</name>
        <dbReference type="ChEBI" id="CHEBI:60344"/>
        <label>b562</label>
    </ligand>
    <ligandPart>
        <name>Fe</name>
        <dbReference type="ChEBI" id="CHEBI:18248"/>
    </ligandPart>
</feature>
<feature type="binding site" description="axial binding residue" evidence="2">
    <location>
        <position position="97"/>
    </location>
    <ligand>
        <name>heme b</name>
        <dbReference type="ChEBI" id="CHEBI:60344"/>
        <label>b566</label>
    </ligand>
    <ligandPart>
        <name>Fe</name>
        <dbReference type="ChEBI" id="CHEBI:18248"/>
    </ligandPart>
</feature>
<feature type="binding site" description="axial binding residue" evidence="2">
    <location>
        <position position="182"/>
    </location>
    <ligand>
        <name>heme b</name>
        <dbReference type="ChEBI" id="CHEBI:60344"/>
        <label>b562</label>
    </ligand>
    <ligandPart>
        <name>Fe</name>
        <dbReference type="ChEBI" id="CHEBI:18248"/>
    </ligandPart>
</feature>
<feature type="binding site" description="axial binding residue" evidence="2">
    <location>
        <position position="196"/>
    </location>
    <ligand>
        <name>heme b</name>
        <dbReference type="ChEBI" id="CHEBI:60344"/>
        <label>b566</label>
    </ligand>
    <ligandPart>
        <name>Fe</name>
        <dbReference type="ChEBI" id="CHEBI:18248"/>
    </ligandPart>
</feature>
<feature type="binding site" evidence="2">
    <location>
        <position position="201"/>
    </location>
    <ligand>
        <name>a ubiquinone</name>
        <dbReference type="ChEBI" id="CHEBI:16389"/>
    </ligand>
</feature>
<sequence>MTNIRKTHPLLKIVNHSLIDLPAPSNISAWWNFGSLLGLCLMIQILTGLFLAMHYTSDTATAFSSVTHICRDVNYGWLIRYLHANGASMFFICLYMHVGRGIYYGSYTYLETWNIGIILLFAVMATAFMGYVLPWGQMSFWGATVITNLLSAIPYIGTTLVEWIWGGFSVDKATLTRFFAFHFILPFIIAALVMIHLLFLHETGSNNPSGIPSDSDKIPFHPYYTIKDVLGFLMLILLLMLLVLFSPDLLGDPDNYTPANPLNTPPHIKPEWYFLFAYAILRSIPNKLGGVLALVMSILILAIIPFLHMSKQRSMMFRPISQVLFWILVADLLTLTWIGGQPVEHPFITIGQVASILYFSIILILMPLASLIENKILKW</sequence>
<gene>
    <name type="primary">MT-CYB</name>
    <name type="synonym">COB</name>
    <name type="synonym">CYTB</name>
    <name type="synonym">MTCYB</name>
</gene>
<name>CYB_LEPCL</name>
<organism>
    <name type="scientific">Lepus californicus</name>
    <name type="common">Black-tailed jackrabbit</name>
    <dbReference type="NCBI Taxonomy" id="48087"/>
    <lineage>
        <taxon>Eukaryota</taxon>
        <taxon>Metazoa</taxon>
        <taxon>Chordata</taxon>
        <taxon>Craniata</taxon>
        <taxon>Vertebrata</taxon>
        <taxon>Euteleostomi</taxon>
        <taxon>Mammalia</taxon>
        <taxon>Eutheria</taxon>
        <taxon>Euarchontoglires</taxon>
        <taxon>Glires</taxon>
        <taxon>Lagomorpha</taxon>
        <taxon>Leporidae</taxon>
        <taxon>Lepus</taxon>
    </lineage>
</organism>
<protein>
    <recommendedName>
        <fullName>Cytochrome b</fullName>
    </recommendedName>
    <alternativeName>
        <fullName>Complex III subunit 3</fullName>
    </alternativeName>
    <alternativeName>
        <fullName>Complex III subunit III</fullName>
    </alternativeName>
    <alternativeName>
        <fullName>Cytochrome b-c1 complex subunit 3</fullName>
    </alternativeName>
    <alternativeName>
        <fullName>Ubiquinol-cytochrome-c reductase complex cytochrome b subunit</fullName>
    </alternativeName>
</protein>
<comment type="function">
    <text evidence="2">Component of the ubiquinol-cytochrome c reductase complex (complex III or cytochrome b-c1 complex) that is part of the mitochondrial respiratory chain. The b-c1 complex mediates electron transfer from ubiquinol to cytochrome c. Contributes to the generation of a proton gradient across the mitochondrial membrane that is then used for ATP synthesis.</text>
</comment>
<comment type="cofactor">
    <cofactor evidence="2">
        <name>heme b</name>
        <dbReference type="ChEBI" id="CHEBI:60344"/>
    </cofactor>
    <text evidence="2">Binds 2 heme b groups non-covalently.</text>
</comment>
<comment type="subunit">
    <text evidence="2">The cytochrome bc1 complex contains 11 subunits: 3 respiratory subunits (MT-CYB, CYC1 and UQCRFS1), 2 core proteins (UQCRC1 and UQCRC2) and 6 low-molecular weight proteins (UQCRH/QCR6, UQCRB/QCR7, UQCRQ/QCR8, UQCR10/QCR9, UQCR11/QCR10 and a cleavage product of UQCRFS1). This cytochrome bc1 complex then forms a dimer.</text>
</comment>
<comment type="subcellular location">
    <subcellularLocation>
        <location evidence="2">Mitochondrion inner membrane</location>
        <topology evidence="2">Multi-pass membrane protein</topology>
    </subcellularLocation>
</comment>
<comment type="miscellaneous">
    <text evidence="1">Heme 1 (or BL or b562) is low-potential and absorbs at about 562 nm, and heme 2 (or BH or b566) is high-potential and absorbs at about 566 nm.</text>
</comment>
<comment type="similarity">
    <text evidence="3 4">Belongs to the cytochrome b family.</text>
</comment>
<comment type="caution">
    <text evidence="2">The full-length protein contains only eight transmembrane helices, not nine as predicted by bioinformatics tools.</text>
</comment>
<evidence type="ECO:0000250" key="1"/>
<evidence type="ECO:0000250" key="2">
    <source>
        <dbReference type="UniProtKB" id="P00157"/>
    </source>
</evidence>
<evidence type="ECO:0000255" key="3">
    <source>
        <dbReference type="PROSITE-ProRule" id="PRU00967"/>
    </source>
</evidence>
<evidence type="ECO:0000255" key="4">
    <source>
        <dbReference type="PROSITE-ProRule" id="PRU00968"/>
    </source>
</evidence>